<protein>
    <recommendedName>
        <fullName>8-amino-7-oxononanoate synthase</fullName>
        <shortName>AONS</shortName>
        <ecNumber>2.3.1.47</ecNumber>
    </recommendedName>
    <alternativeName>
        <fullName>7-keto-8-amino-pelargonic acid synthase</fullName>
        <shortName>7-KAP synthase</shortName>
        <shortName>KAPA synthase</shortName>
    </alternativeName>
    <alternativeName>
        <fullName>8-amino-7-ketopelargonate synthase</fullName>
    </alternativeName>
    <alternativeName>
        <fullName>Alpha-oxoamine synthase</fullName>
    </alternativeName>
</protein>
<keyword id="KW-0012">Acyltransferase</keyword>
<keyword id="KW-0093">Biotin biosynthesis</keyword>
<keyword id="KW-0663">Pyridoxal phosphate</keyword>
<keyword id="KW-1185">Reference proteome</keyword>
<keyword id="KW-0808">Transferase</keyword>
<sequence length="379" mass="39215">MPASLTPSLDAFAEAKLAGLNAAGLRRRLVPTARTGGARAERGGRPVVSFSCNDYLGLATHPAVVAAARAALERYGAGSGGSRLVTGDHPVFAELEAELARRKGHEAALVFGSGYLANLGITPALAGAGDLILIDELGHSCMWAGTRLSGARTLPFRHNDLKHLEALLARERGEARHALILTERVFSMDGDRAPVADILDLARSFDAWTLVDDAHGLGVVGPDATAPLEMGTLSKALGSYGGYLCASRAVIDLLTSRARSFVYTTGLPPASAAAALAALRLIEAEPERAARPLALARRFTARLGLPEAQSAVVPVLVGEAEAALALSRALEARGFLVVAIRPPTVPAGTARLRIAFSAAHAEAEVDALAQALSELGAAG</sequence>
<proteinExistence type="inferred from homology"/>
<comment type="function">
    <text evidence="1">Catalyzes the decarboxylative condensation of pimeloyl-[acyl-carrier protein] and L-alanine to produce 8-amino-7-oxononanoate (AON), [acyl-carrier protein], and carbon dioxide.</text>
</comment>
<comment type="catalytic activity">
    <reaction>
        <text>6-carboxyhexanoyl-[ACP] + L-alanine + H(+) = (8S)-8-amino-7-oxononanoate + holo-[ACP] + CO2</text>
        <dbReference type="Rhea" id="RHEA:42288"/>
        <dbReference type="Rhea" id="RHEA-COMP:9685"/>
        <dbReference type="Rhea" id="RHEA-COMP:9955"/>
        <dbReference type="ChEBI" id="CHEBI:15378"/>
        <dbReference type="ChEBI" id="CHEBI:16526"/>
        <dbReference type="ChEBI" id="CHEBI:57972"/>
        <dbReference type="ChEBI" id="CHEBI:64479"/>
        <dbReference type="ChEBI" id="CHEBI:78846"/>
        <dbReference type="ChEBI" id="CHEBI:149468"/>
        <dbReference type="EC" id="2.3.1.47"/>
    </reaction>
</comment>
<comment type="cofactor">
    <cofactor evidence="1">
        <name>pyridoxal 5'-phosphate</name>
        <dbReference type="ChEBI" id="CHEBI:597326"/>
    </cofactor>
</comment>
<comment type="pathway">
    <text>Cofactor biosynthesis; biotin biosynthesis.</text>
</comment>
<comment type="subunit">
    <text evidence="1">Homodimer.</text>
</comment>
<comment type="similarity">
    <text evidence="2">Belongs to the class-II pyridoxal-phosphate-dependent aminotransferase family. BioF subfamily.</text>
</comment>
<reference key="1">
    <citation type="submission" date="2009-01" db="EMBL/GenBank/DDBJ databases">
        <title>Complete sequence of chromosome of Methylobacterium nodulans ORS 2060.</title>
        <authorList>
            <consortium name="US DOE Joint Genome Institute"/>
            <person name="Lucas S."/>
            <person name="Copeland A."/>
            <person name="Lapidus A."/>
            <person name="Glavina del Rio T."/>
            <person name="Dalin E."/>
            <person name="Tice H."/>
            <person name="Bruce D."/>
            <person name="Goodwin L."/>
            <person name="Pitluck S."/>
            <person name="Sims D."/>
            <person name="Brettin T."/>
            <person name="Detter J.C."/>
            <person name="Han C."/>
            <person name="Larimer F."/>
            <person name="Land M."/>
            <person name="Hauser L."/>
            <person name="Kyrpides N."/>
            <person name="Ivanova N."/>
            <person name="Marx C.J."/>
            <person name="Richardson P."/>
        </authorList>
    </citation>
    <scope>NUCLEOTIDE SEQUENCE [LARGE SCALE GENOMIC DNA]</scope>
    <source>
        <strain>LMG 21967 / CNCM I-2342 / ORS 2060</strain>
    </source>
</reference>
<gene>
    <name type="ordered locus">Mnod_6357</name>
</gene>
<name>BIOF_METNO</name>
<evidence type="ECO:0000250" key="1"/>
<evidence type="ECO:0000305" key="2"/>
<organism>
    <name type="scientific">Methylobacterium nodulans (strain LMG 21967 / CNCM I-2342 / ORS 2060)</name>
    <dbReference type="NCBI Taxonomy" id="460265"/>
    <lineage>
        <taxon>Bacteria</taxon>
        <taxon>Pseudomonadati</taxon>
        <taxon>Pseudomonadota</taxon>
        <taxon>Alphaproteobacteria</taxon>
        <taxon>Hyphomicrobiales</taxon>
        <taxon>Methylobacteriaceae</taxon>
        <taxon>Methylobacterium</taxon>
    </lineage>
</organism>
<dbReference type="EC" id="2.3.1.47"/>
<dbReference type="EMBL" id="CP001349">
    <property type="protein sequence ID" value="ACL61144.1"/>
    <property type="molecule type" value="Genomic_DNA"/>
</dbReference>
<dbReference type="RefSeq" id="WP_015932723.1">
    <property type="nucleotide sequence ID" value="NC_011894.1"/>
</dbReference>
<dbReference type="SMR" id="B8IBW2"/>
<dbReference type="STRING" id="460265.Mnod_6357"/>
<dbReference type="KEGG" id="mno:Mnod_6357"/>
<dbReference type="eggNOG" id="COG0156">
    <property type="taxonomic scope" value="Bacteria"/>
</dbReference>
<dbReference type="HOGENOM" id="CLU_015846_11_2_5"/>
<dbReference type="OrthoDB" id="9807157at2"/>
<dbReference type="UniPathway" id="UPA00078"/>
<dbReference type="Proteomes" id="UP000008207">
    <property type="component" value="Chromosome"/>
</dbReference>
<dbReference type="GO" id="GO:0008710">
    <property type="term" value="F:8-amino-7-oxononanoate synthase activity"/>
    <property type="evidence" value="ECO:0007669"/>
    <property type="project" value="UniProtKB-EC"/>
</dbReference>
<dbReference type="GO" id="GO:0030170">
    <property type="term" value="F:pyridoxal phosphate binding"/>
    <property type="evidence" value="ECO:0007669"/>
    <property type="project" value="InterPro"/>
</dbReference>
<dbReference type="GO" id="GO:0009102">
    <property type="term" value="P:biotin biosynthetic process"/>
    <property type="evidence" value="ECO:0007669"/>
    <property type="project" value="UniProtKB-UniPathway"/>
</dbReference>
<dbReference type="Gene3D" id="3.90.1150.10">
    <property type="entry name" value="Aspartate Aminotransferase, domain 1"/>
    <property type="match status" value="1"/>
</dbReference>
<dbReference type="Gene3D" id="3.40.640.10">
    <property type="entry name" value="Type I PLP-dependent aspartate aminotransferase-like (Major domain)"/>
    <property type="match status" value="1"/>
</dbReference>
<dbReference type="InterPro" id="IPR001917">
    <property type="entry name" value="Aminotrans_II_pyridoxalP_BS"/>
</dbReference>
<dbReference type="InterPro" id="IPR004839">
    <property type="entry name" value="Aminotransferase_I/II_large"/>
</dbReference>
<dbReference type="InterPro" id="IPR050087">
    <property type="entry name" value="AON_synthase_class-II"/>
</dbReference>
<dbReference type="InterPro" id="IPR015424">
    <property type="entry name" value="PyrdxlP-dep_Trfase"/>
</dbReference>
<dbReference type="InterPro" id="IPR015421">
    <property type="entry name" value="PyrdxlP-dep_Trfase_major"/>
</dbReference>
<dbReference type="InterPro" id="IPR015422">
    <property type="entry name" value="PyrdxlP-dep_Trfase_small"/>
</dbReference>
<dbReference type="PANTHER" id="PTHR13693:SF100">
    <property type="entry name" value="8-AMINO-7-OXONONANOATE SYNTHASE"/>
    <property type="match status" value="1"/>
</dbReference>
<dbReference type="PANTHER" id="PTHR13693">
    <property type="entry name" value="CLASS II AMINOTRANSFERASE/8-AMINO-7-OXONONANOATE SYNTHASE"/>
    <property type="match status" value="1"/>
</dbReference>
<dbReference type="Pfam" id="PF00155">
    <property type="entry name" value="Aminotran_1_2"/>
    <property type="match status" value="1"/>
</dbReference>
<dbReference type="SUPFAM" id="SSF53383">
    <property type="entry name" value="PLP-dependent transferases"/>
    <property type="match status" value="1"/>
</dbReference>
<dbReference type="PROSITE" id="PS00599">
    <property type="entry name" value="AA_TRANSFER_CLASS_2"/>
    <property type="match status" value="1"/>
</dbReference>
<accession>B8IBW2</accession>
<feature type="chain" id="PRO_0000381025" description="8-amino-7-oxononanoate synthase">
    <location>
        <begin position="1"/>
        <end position="379"/>
    </location>
</feature>
<feature type="binding site" evidence="1">
    <location>
        <position position="27"/>
    </location>
    <ligand>
        <name>substrate</name>
    </ligand>
</feature>
<feature type="binding site" evidence="1">
    <location>
        <position position="34"/>
    </location>
    <ligand>
        <name>substrate</name>
    </ligand>
</feature>
<feature type="binding site" evidence="1">
    <location>
        <begin position="114"/>
        <end position="115"/>
    </location>
    <ligand>
        <name>pyridoxal 5'-phosphate</name>
        <dbReference type="ChEBI" id="CHEBI:597326"/>
    </ligand>
</feature>
<feature type="binding site" evidence="1">
    <location>
        <position position="139"/>
    </location>
    <ligand>
        <name>substrate</name>
    </ligand>
</feature>
<feature type="binding site" evidence="1">
    <location>
        <position position="187"/>
    </location>
    <ligand>
        <name>pyridoxal 5'-phosphate</name>
        <dbReference type="ChEBI" id="CHEBI:597326"/>
    </ligand>
</feature>
<feature type="binding site" evidence="1">
    <location>
        <begin position="212"/>
        <end position="215"/>
    </location>
    <ligand>
        <name>pyridoxal 5'-phosphate</name>
        <dbReference type="ChEBI" id="CHEBI:597326"/>
    </ligand>
</feature>
<feature type="binding site" evidence="1">
    <location>
        <begin position="232"/>
        <end position="235"/>
    </location>
    <ligand>
        <name>pyridoxal 5'-phosphate</name>
        <dbReference type="ChEBI" id="CHEBI:597326"/>
    </ligand>
</feature>
<feature type="binding site" evidence="1">
    <location>
        <position position="344"/>
    </location>
    <ligand>
        <name>substrate</name>
    </ligand>
</feature>
<feature type="modified residue" description="N6-(pyridoxal phosphate)lysine" evidence="1">
    <location>
        <position position="235"/>
    </location>
</feature>